<proteinExistence type="evidence at protein level"/>
<gene>
    <name type="primary">Rgs12</name>
</gene>
<feature type="chain" id="PRO_0000408474" description="Regulator of G-protein signaling 12">
    <location>
        <begin position="1"/>
        <end position="1381"/>
    </location>
</feature>
<feature type="domain" description="PDZ" evidence="5">
    <location>
        <begin position="21"/>
        <end position="98"/>
    </location>
</feature>
<feature type="domain" description="PID" evidence="6">
    <location>
        <begin position="223"/>
        <end position="390"/>
    </location>
</feature>
<feature type="domain" description="RGS" evidence="7">
    <location>
        <begin position="715"/>
        <end position="832"/>
    </location>
</feature>
<feature type="domain" description="RBD 1" evidence="8">
    <location>
        <begin position="962"/>
        <end position="1032"/>
    </location>
</feature>
<feature type="domain" description="RBD 2" evidence="8">
    <location>
        <begin position="1034"/>
        <end position="1104"/>
    </location>
</feature>
<feature type="domain" description="GoLoco" evidence="4">
    <location>
        <begin position="1187"/>
        <end position="1209"/>
    </location>
</feature>
<feature type="region of interest" description="Disordered" evidence="9">
    <location>
        <begin position="409"/>
        <end position="428"/>
    </location>
</feature>
<feature type="region of interest" description="Disordered" evidence="9">
    <location>
        <begin position="442"/>
        <end position="528"/>
    </location>
</feature>
<feature type="region of interest" description="Disordered" evidence="9">
    <location>
        <begin position="620"/>
        <end position="644"/>
    </location>
</feature>
<feature type="region of interest" description="Disordered" evidence="9">
    <location>
        <begin position="842"/>
        <end position="942"/>
    </location>
</feature>
<feature type="region of interest" description="Disordered" evidence="9">
    <location>
        <begin position="1102"/>
        <end position="1169"/>
    </location>
</feature>
<feature type="region of interest" description="Disordered" evidence="9">
    <location>
        <begin position="1227"/>
        <end position="1318"/>
    </location>
</feature>
<feature type="region of interest" description="Disordered" evidence="9">
    <location>
        <begin position="1347"/>
        <end position="1381"/>
    </location>
</feature>
<feature type="compositionally biased region" description="Polar residues" evidence="9">
    <location>
        <begin position="412"/>
        <end position="428"/>
    </location>
</feature>
<feature type="compositionally biased region" description="Low complexity" evidence="9">
    <location>
        <begin position="849"/>
        <end position="869"/>
    </location>
</feature>
<feature type="compositionally biased region" description="Basic and acidic residues" evidence="9">
    <location>
        <begin position="914"/>
        <end position="923"/>
    </location>
</feature>
<feature type="compositionally biased region" description="Basic and acidic residues" evidence="9">
    <location>
        <begin position="1102"/>
        <end position="1117"/>
    </location>
</feature>
<feature type="compositionally biased region" description="Polar residues" evidence="9">
    <location>
        <begin position="1122"/>
        <end position="1132"/>
    </location>
</feature>
<feature type="compositionally biased region" description="Basic and acidic residues" evidence="9">
    <location>
        <begin position="1151"/>
        <end position="1169"/>
    </location>
</feature>
<feature type="compositionally biased region" description="Low complexity" evidence="9">
    <location>
        <begin position="1261"/>
        <end position="1280"/>
    </location>
</feature>
<feature type="compositionally biased region" description="Pro residues" evidence="9">
    <location>
        <begin position="1361"/>
        <end position="1381"/>
    </location>
</feature>
<feature type="modified residue" description="Phosphoserine" evidence="12">
    <location>
        <position position="171"/>
    </location>
</feature>
<feature type="modified residue" description="Phosphoserine" evidence="12">
    <location>
        <position position="194"/>
    </location>
</feature>
<feature type="modified residue" description="Omega-N-methylarginine" evidence="3">
    <location>
        <position position="524"/>
    </location>
</feature>
<feature type="modified residue" description="Omega-N-methylarginine" evidence="13">
    <location>
        <position position="633"/>
    </location>
</feature>
<feature type="modified residue" description="Phosphoserine" evidence="12">
    <location>
        <position position="661"/>
    </location>
</feature>
<feature type="modified residue" description="Phosphoserine" evidence="12">
    <location>
        <position position="671"/>
    </location>
</feature>
<feature type="modified residue" description="Phosphoserine" evidence="12">
    <location>
        <position position="850"/>
    </location>
</feature>
<feature type="modified residue" description="Phosphoserine" evidence="12">
    <location>
        <position position="879"/>
    </location>
</feature>
<feature type="modified residue" description="Phosphoserine" evidence="12">
    <location>
        <position position="943"/>
    </location>
</feature>
<feature type="cross-link" description="Glycyl lysine isopeptide (Lys-Gly) (interchain with G-Cter in SUMO2)" evidence="3">
    <location>
        <position position="195"/>
    </location>
</feature>
<feature type="sequence conflict" description="In Ref. 2; AAH40396." evidence="11" ref="2">
    <original>R</original>
    <variation>K</variation>
    <location>
        <position position="536"/>
    </location>
</feature>
<feature type="sequence conflict" description="In Ref. 2; AAH40396." evidence="11" ref="2">
    <original>L</original>
    <variation>S</variation>
    <location>
        <position position="1135"/>
    </location>
</feature>
<sequence length="1381" mass="149637">MYRAGEPGKRQPGPAPPRVRSVEVARGRAGYGFTLSGQAPCVLSCVMRGSPADFVGLRAGDQILAINEINVKKASHEDVVKLIGKCSGVLHMVIAEGTSHVESCSSDEEGGLYEGKGWLRPKLDSKALGINRAERVVEEVQSGGIFNMIFESSSLCASGPEPLKLKQRSLSESAALRLDAGQAGLCAPHPSMLSKEDISKVINDDSVFTVGLDSHDDFGLDASILNVAMVVGYLGSIELPSTSSNLEHDSLQAIRGCMRRLRAEQKIHSLVTMKVMHDCVQLVTDRAGVVAEYPAEKLAFSAVCPDDRRFFGLVTMQTNDDGGLAQEDEGALRTSCHVFMVDPDLFHHKIHQGIARRFGFACTADPDTSGCLEFPASSLPVLQFISVLYRDMGELIEGVRARAFLDGDADAHQNNSTSSNSDSGIGNFNQEEKSNRVLVVDLGGGSSRHGQGSSPGWESGGGRGSQPWSAPWNGAFCHDSEAGSPLETSPNTDRFWDLTKHSGPVSHMEVPPATLRSSIPPSKRGAAGSSCGFNQRWLPVHVLQEWQCGHASDQESYTDSTDGWSSVNCGTLPPPMSKIPADRYRVEGSFAQAPLSTQKRDWSRKAFGMQNLFGPHRNVRKTKEDKKSSKLGRGVALAQTSQRTSARRSFGRSRRFSITRSLDDLESATVSDGELTGADLKDCISNNSLSSNASLPSVQSCRRLRERRVASWAVSFERLLQDPVGVRYFSDFLRKEFSEENILFWQACECFSHVPAHDKKELSYRAREIFSKFLCSKATTPVNIDSQAQLADDILNAPHPDMFKEQQLQIFNLMKFDSYTRFLKSQLYQECVLAEVEGRTLPDSQQVPSSPASKHSISSDHSNVSTPKKLSGKSKSGRSLNEDVGEEDSEKKRRGAFFSWSRSRSTGRSQKKKDHGDHAHDAPHANGGLCRRESQGSVSSAGSLDLSEACRTSALEKDKAAKHCCVHLPDGTSCVVAVKSGFSIKEILSGLCERHGINGAAVDLFLVGGDKPLVLHQDSSILATRDLRLEKRTLFRLDLVPINRSVGLKAKPTKPVTEVLRPVVAKYGLDLGSLLVRLSGEKEPLDLGAPISSLDGQRVILEERDPSRGKVSTDKQKGAPVKQNSAVNSSPRNHLAMGEERTLGKSNSIKIRGENGKSARDPRLSKREESIAKIGKKKYQKINLDEAEEFFELISKAQSNRADDQRGLLRKEDLVLPEFLRLPAGSSELALSSPPPVKGYSKRAVTGHGQEGAAQTEESYSDSPATSPASAQSPCSAYSPGSAHSPGSAHSTPGPPGTTQPGEKPTKPSCVSMVQEGTTQAWRRLSPEMEAGGIQTVEDEQVADLTLMGEGDISSPNSTLLPPPPTPQDTPGPPRPGTSRF</sequence>
<comment type="function">
    <text evidence="2">Regulates G protein-coupled receptor signaling cascades. Inhibits signal transduction by increasing the GTPase activity of G protein alpha subunits, thereby driving them into their inactive GDP-bound form.</text>
</comment>
<comment type="subunit">
    <text evidence="2">Interacts with GNAI1, GNAI2 and GNAI3; the interactions are GDP-dependent.</text>
</comment>
<comment type="interaction">
    <interactant intactId="EBI-7340552">
        <id>Q8CGE9</id>
    </interactant>
    <interactant intactId="EBI-397724">
        <id>Q63932</id>
        <label>Map2k2</label>
    </interactant>
    <organismsDiffer>false</organismsDiffer>
    <experiments>3</experiments>
</comment>
<comment type="interaction">
    <interactant intactId="EBI-7340552">
        <id>Q8CGE9</id>
    </interactant>
    <interactant intactId="EBI-365980">
        <id>P15056</id>
        <label>BRAF</label>
    </interactant>
    <organismsDiffer>true</organismsDiffer>
    <experiments>2</experiments>
</comment>
<comment type="subcellular location">
    <subcellularLocation>
        <location evidence="2">Nucleus</location>
    </subcellularLocation>
    <subcellularLocation>
        <location evidence="2">Cytoplasm</location>
    </subcellularLocation>
    <subcellularLocation>
        <location evidence="2">Cell projection</location>
        <location evidence="2">Dendrite</location>
    </subcellularLocation>
    <subcellularLocation>
        <location evidence="2">Synapse</location>
    </subcellularLocation>
</comment>
<comment type="tissue specificity">
    <text evidence="10">Expressed in brain.</text>
</comment>
<comment type="developmental stage">
    <text evidence="10">Expressed in germinal vesicle oocyte, metaphase II oocyte and blastocyst (at protein level). Expressed in oocyte.</text>
</comment>
<comment type="domain">
    <text evidence="1">The GoLoco domain is necessary for interaction with GNAI1, GNAI2 and GNAI3.</text>
</comment>
<organism>
    <name type="scientific">Mus musculus</name>
    <name type="common">Mouse</name>
    <dbReference type="NCBI Taxonomy" id="10090"/>
    <lineage>
        <taxon>Eukaryota</taxon>
        <taxon>Metazoa</taxon>
        <taxon>Chordata</taxon>
        <taxon>Craniata</taxon>
        <taxon>Vertebrata</taxon>
        <taxon>Euteleostomi</taxon>
        <taxon>Mammalia</taxon>
        <taxon>Eutheria</taxon>
        <taxon>Euarchontoglires</taxon>
        <taxon>Glires</taxon>
        <taxon>Rodentia</taxon>
        <taxon>Myomorpha</taxon>
        <taxon>Muroidea</taxon>
        <taxon>Muridae</taxon>
        <taxon>Murinae</taxon>
        <taxon>Mus</taxon>
        <taxon>Mus</taxon>
    </lineage>
</organism>
<dbReference type="EMBL" id="AC126447">
    <property type="status" value="NOT_ANNOTATED_CDS"/>
    <property type="molecule type" value="Genomic_DNA"/>
</dbReference>
<dbReference type="EMBL" id="AC133204">
    <property type="status" value="NOT_ANNOTATED_CDS"/>
    <property type="molecule type" value="Genomic_DNA"/>
</dbReference>
<dbReference type="EMBL" id="BC040396">
    <property type="protein sequence ID" value="AAH40396.1"/>
    <property type="molecule type" value="mRNA"/>
</dbReference>
<dbReference type="CCDS" id="CCDS19222.1"/>
<dbReference type="RefSeq" id="NP_001390400.1">
    <property type="nucleotide sequence ID" value="NM_001403471.1"/>
</dbReference>
<dbReference type="RefSeq" id="NP_775578.2">
    <property type="nucleotide sequence ID" value="NM_173402.3"/>
</dbReference>
<dbReference type="SMR" id="Q8CGE9"/>
<dbReference type="BioGRID" id="214886">
    <property type="interactions" value="3"/>
</dbReference>
<dbReference type="FunCoup" id="Q8CGE9">
    <property type="interactions" value="1816"/>
</dbReference>
<dbReference type="IntAct" id="Q8CGE9">
    <property type="interactions" value="6"/>
</dbReference>
<dbReference type="MINT" id="Q8CGE9"/>
<dbReference type="STRING" id="10090.ENSMUSP00000030984"/>
<dbReference type="GlyGen" id="Q8CGE9">
    <property type="glycosylation" value="2 sites, 1 O-linked glycan (1 site)"/>
</dbReference>
<dbReference type="iPTMnet" id="Q8CGE9"/>
<dbReference type="PhosphoSitePlus" id="Q8CGE9"/>
<dbReference type="jPOST" id="Q8CGE9"/>
<dbReference type="PaxDb" id="10090-ENSMUSP00000030984"/>
<dbReference type="ProteomicsDB" id="253261"/>
<dbReference type="Pumba" id="Q8CGE9"/>
<dbReference type="Antibodypedia" id="22482">
    <property type="antibodies" value="97 antibodies from 22 providers"/>
</dbReference>
<dbReference type="DNASU" id="71729"/>
<dbReference type="Ensembl" id="ENSMUST00000030984.14">
    <property type="protein sequence ID" value="ENSMUSP00000030984.8"/>
    <property type="gene ID" value="ENSMUSG00000029101.17"/>
</dbReference>
<dbReference type="GeneID" id="71729"/>
<dbReference type="KEGG" id="mmu:71729"/>
<dbReference type="UCSC" id="uc008xdg.2">
    <property type="organism name" value="mouse"/>
</dbReference>
<dbReference type="AGR" id="MGI:1918979"/>
<dbReference type="CTD" id="6002"/>
<dbReference type="MGI" id="MGI:1918979">
    <property type="gene designation" value="Rgs12"/>
</dbReference>
<dbReference type="VEuPathDB" id="HostDB:ENSMUSG00000029101"/>
<dbReference type="eggNOG" id="KOG3589">
    <property type="taxonomic scope" value="Eukaryota"/>
</dbReference>
<dbReference type="GeneTree" id="ENSGT00940000159741"/>
<dbReference type="HOGENOM" id="CLU_002190_0_0_1"/>
<dbReference type="InParanoid" id="Q8CGE9"/>
<dbReference type="OMA" id="HKSEWSK"/>
<dbReference type="OrthoDB" id="196547at2759"/>
<dbReference type="TreeFam" id="TF328814"/>
<dbReference type="Reactome" id="R-MMU-418594">
    <property type="pathway name" value="G alpha (i) signalling events"/>
</dbReference>
<dbReference type="BioGRID-ORCS" id="71729">
    <property type="hits" value="2 hits in 81 CRISPR screens"/>
</dbReference>
<dbReference type="CD-CODE" id="CE726F99">
    <property type="entry name" value="Postsynaptic density"/>
</dbReference>
<dbReference type="ChiTaRS" id="Rgs12">
    <property type="organism name" value="mouse"/>
</dbReference>
<dbReference type="PRO" id="PR:Q8CGE9"/>
<dbReference type="Proteomes" id="UP000000589">
    <property type="component" value="Chromosome 5"/>
</dbReference>
<dbReference type="RNAct" id="Q8CGE9">
    <property type="molecule type" value="protein"/>
</dbReference>
<dbReference type="Bgee" id="ENSMUSG00000029101">
    <property type="expression patterns" value="Expressed in spermatocyte and 203 other cell types or tissues"/>
</dbReference>
<dbReference type="ExpressionAtlas" id="Q8CGE9">
    <property type="expression patterns" value="baseline and differential"/>
</dbReference>
<dbReference type="GO" id="GO:0005737">
    <property type="term" value="C:cytoplasm"/>
    <property type="evidence" value="ECO:0000250"/>
    <property type="project" value="UniProtKB"/>
</dbReference>
<dbReference type="GO" id="GO:0030425">
    <property type="term" value="C:dendrite"/>
    <property type="evidence" value="ECO:0000250"/>
    <property type="project" value="UniProtKB"/>
</dbReference>
<dbReference type="GO" id="GO:0005634">
    <property type="term" value="C:nucleus"/>
    <property type="evidence" value="ECO:0000250"/>
    <property type="project" value="UniProtKB"/>
</dbReference>
<dbReference type="GO" id="GO:0045202">
    <property type="term" value="C:synapse"/>
    <property type="evidence" value="ECO:0007669"/>
    <property type="project" value="UniProtKB-SubCell"/>
</dbReference>
<dbReference type="GO" id="GO:0005096">
    <property type="term" value="F:GTPase activator activity"/>
    <property type="evidence" value="ECO:0007669"/>
    <property type="project" value="UniProtKB-KW"/>
</dbReference>
<dbReference type="GO" id="GO:0009968">
    <property type="term" value="P:negative regulation of signal transduction"/>
    <property type="evidence" value="ECO:0007669"/>
    <property type="project" value="UniProtKB-ARBA"/>
</dbReference>
<dbReference type="GO" id="GO:0007165">
    <property type="term" value="P:signal transduction"/>
    <property type="evidence" value="ECO:0007669"/>
    <property type="project" value="InterPro"/>
</dbReference>
<dbReference type="CDD" id="cd06710">
    <property type="entry name" value="PDZ_RGS12-like"/>
    <property type="match status" value="1"/>
</dbReference>
<dbReference type="CDD" id="cd13162">
    <property type="entry name" value="PTB_RGS12"/>
    <property type="match status" value="1"/>
</dbReference>
<dbReference type="CDD" id="cd17136">
    <property type="entry name" value="RBD1_RGS12"/>
    <property type="match status" value="1"/>
</dbReference>
<dbReference type="CDD" id="cd08742">
    <property type="entry name" value="RGS_RGS12"/>
    <property type="match status" value="1"/>
</dbReference>
<dbReference type="FunFam" id="1.10.167.10:FF:000001">
    <property type="entry name" value="Putative regulator of g-protein signaling 12"/>
    <property type="match status" value="1"/>
</dbReference>
<dbReference type="FunFam" id="2.30.29.30:FF:000296">
    <property type="entry name" value="Regulator of G protein signaling 12"/>
    <property type="match status" value="1"/>
</dbReference>
<dbReference type="FunFam" id="2.30.42.10:FF:000115">
    <property type="entry name" value="Regulator of G-protein signaling 12"/>
    <property type="match status" value="1"/>
</dbReference>
<dbReference type="FunFam" id="3.10.20.90:FF:000152">
    <property type="entry name" value="regulator of G-protein signaling 12"/>
    <property type="match status" value="1"/>
</dbReference>
<dbReference type="Gene3D" id="1.10.196.10">
    <property type="match status" value="1"/>
</dbReference>
<dbReference type="Gene3D" id="2.30.42.10">
    <property type="match status" value="1"/>
</dbReference>
<dbReference type="Gene3D" id="3.10.20.90">
    <property type="entry name" value="Phosphatidylinositol 3-kinase Catalytic Subunit, Chain A, domain 1"/>
    <property type="match status" value="2"/>
</dbReference>
<dbReference type="Gene3D" id="2.30.29.30">
    <property type="entry name" value="Pleckstrin-homology domain (PH domain)/Phosphotyrosine-binding domain (PTB)"/>
    <property type="match status" value="1"/>
</dbReference>
<dbReference type="Gene3D" id="1.10.167.10">
    <property type="entry name" value="Regulator of G-protein Signalling 4, domain 2"/>
    <property type="match status" value="1"/>
</dbReference>
<dbReference type="InterPro" id="IPR003109">
    <property type="entry name" value="GoLoco_motif"/>
</dbReference>
<dbReference type="InterPro" id="IPR001478">
    <property type="entry name" value="PDZ"/>
</dbReference>
<dbReference type="InterPro" id="IPR036034">
    <property type="entry name" value="PDZ_sf"/>
</dbReference>
<dbReference type="InterPro" id="IPR011993">
    <property type="entry name" value="PH-like_dom_sf"/>
</dbReference>
<dbReference type="InterPro" id="IPR006020">
    <property type="entry name" value="PTB/PI_dom"/>
</dbReference>
<dbReference type="InterPro" id="IPR003116">
    <property type="entry name" value="RBD_dom"/>
</dbReference>
<dbReference type="InterPro" id="IPR016137">
    <property type="entry name" value="RGS"/>
</dbReference>
<dbReference type="InterPro" id="IPR046995">
    <property type="entry name" value="RGS10/12/14-like"/>
</dbReference>
<dbReference type="InterPro" id="IPR037880">
    <property type="entry name" value="RGS12_RGS"/>
</dbReference>
<dbReference type="InterPro" id="IPR036305">
    <property type="entry name" value="RGS_sf"/>
</dbReference>
<dbReference type="InterPro" id="IPR024066">
    <property type="entry name" value="RGS_subdom1/3"/>
</dbReference>
<dbReference type="InterPro" id="IPR044926">
    <property type="entry name" value="RGS_subdomain_2"/>
</dbReference>
<dbReference type="InterPro" id="IPR029071">
    <property type="entry name" value="Ubiquitin-like_domsf"/>
</dbReference>
<dbReference type="PANTHER" id="PTHR45945:SF1">
    <property type="entry name" value="REGULATOR OF G-PROTEIN SIGNALING 12"/>
    <property type="match status" value="1"/>
</dbReference>
<dbReference type="PANTHER" id="PTHR45945">
    <property type="entry name" value="REGULATOR OF G-PROTEIN SIGNALING LOCO"/>
    <property type="match status" value="1"/>
</dbReference>
<dbReference type="Pfam" id="PF02188">
    <property type="entry name" value="GoLoco"/>
    <property type="match status" value="1"/>
</dbReference>
<dbReference type="Pfam" id="PF00595">
    <property type="entry name" value="PDZ"/>
    <property type="match status" value="1"/>
</dbReference>
<dbReference type="Pfam" id="PF02196">
    <property type="entry name" value="RBD"/>
    <property type="match status" value="1"/>
</dbReference>
<dbReference type="Pfam" id="PF00615">
    <property type="entry name" value="RGS"/>
    <property type="match status" value="1"/>
</dbReference>
<dbReference type="Pfam" id="PF16613">
    <property type="entry name" value="RGS12_us1"/>
    <property type="match status" value="1"/>
</dbReference>
<dbReference type="Pfam" id="PF16611">
    <property type="entry name" value="RGS12_us2"/>
    <property type="match status" value="1"/>
</dbReference>
<dbReference type="Pfam" id="PF16612">
    <property type="entry name" value="RGS12_usC"/>
    <property type="match status" value="1"/>
</dbReference>
<dbReference type="PRINTS" id="PR01301">
    <property type="entry name" value="RGSPROTEIN"/>
</dbReference>
<dbReference type="SMART" id="SM00390">
    <property type="entry name" value="GoLoco"/>
    <property type="match status" value="1"/>
</dbReference>
<dbReference type="SMART" id="SM00228">
    <property type="entry name" value="PDZ"/>
    <property type="match status" value="1"/>
</dbReference>
<dbReference type="SMART" id="SM00462">
    <property type="entry name" value="PTB"/>
    <property type="match status" value="1"/>
</dbReference>
<dbReference type="SMART" id="SM00455">
    <property type="entry name" value="RBD"/>
    <property type="match status" value="2"/>
</dbReference>
<dbReference type="SMART" id="SM00315">
    <property type="entry name" value="RGS"/>
    <property type="match status" value="1"/>
</dbReference>
<dbReference type="SUPFAM" id="SSF50156">
    <property type="entry name" value="PDZ domain-like"/>
    <property type="match status" value="1"/>
</dbReference>
<dbReference type="SUPFAM" id="SSF50729">
    <property type="entry name" value="PH domain-like"/>
    <property type="match status" value="1"/>
</dbReference>
<dbReference type="SUPFAM" id="SSF48097">
    <property type="entry name" value="Regulator of G-protein signaling, RGS"/>
    <property type="match status" value="1"/>
</dbReference>
<dbReference type="SUPFAM" id="SSF54236">
    <property type="entry name" value="Ubiquitin-like"/>
    <property type="match status" value="2"/>
</dbReference>
<dbReference type="PROSITE" id="PS50877">
    <property type="entry name" value="GOLOCO"/>
    <property type="match status" value="1"/>
</dbReference>
<dbReference type="PROSITE" id="PS50106">
    <property type="entry name" value="PDZ"/>
    <property type="match status" value="1"/>
</dbReference>
<dbReference type="PROSITE" id="PS01179">
    <property type="entry name" value="PID"/>
    <property type="match status" value="1"/>
</dbReference>
<dbReference type="PROSITE" id="PS50898">
    <property type="entry name" value="RBD"/>
    <property type="match status" value="2"/>
</dbReference>
<dbReference type="PROSITE" id="PS50132">
    <property type="entry name" value="RGS"/>
    <property type="match status" value="1"/>
</dbReference>
<evidence type="ECO:0000250" key="1"/>
<evidence type="ECO:0000250" key="2">
    <source>
        <dbReference type="UniProtKB" id="O08774"/>
    </source>
</evidence>
<evidence type="ECO:0000250" key="3">
    <source>
        <dbReference type="UniProtKB" id="O14924"/>
    </source>
</evidence>
<evidence type="ECO:0000255" key="4">
    <source>
        <dbReference type="PROSITE-ProRule" id="PRU00097"/>
    </source>
</evidence>
<evidence type="ECO:0000255" key="5">
    <source>
        <dbReference type="PROSITE-ProRule" id="PRU00143"/>
    </source>
</evidence>
<evidence type="ECO:0000255" key="6">
    <source>
        <dbReference type="PROSITE-ProRule" id="PRU00148"/>
    </source>
</evidence>
<evidence type="ECO:0000255" key="7">
    <source>
        <dbReference type="PROSITE-ProRule" id="PRU00171"/>
    </source>
</evidence>
<evidence type="ECO:0000255" key="8">
    <source>
        <dbReference type="PROSITE-ProRule" id="PRU00262"/>
    </source>
</evidence>
<evidence type="ECO:0000256" key="9">
    <source>
        <dbReference type="SAM" id="MobiDB-lite"/>
    </source>
</evidence>
<evidence type="ECO:0000269" key="10">
    <source>
    </source>
</evidence>
<evidence type="ECO:0000305" key="11"/>
<evidence type="ECO:0007744" key="12">
    <source>
    </source>
</evidence>
<evidence type="ECO:0007744" key="13">
    <source>
    </source>
</evidence>
<reference key="1">
    <citation type="journal article" date="2009" name="PLoS Biol.">
        <title>Lineage-specific biology revealed by a finished genome assembly of the mouse.</title>
        <authorList>
            <person name="Church D.M."/>
            <person name="Goodstadt L."/>
            <person name="Hillier L.W."/>
            <person name="Zody M.C."/>
            <person name="Goldstein S."/>
            <person name="She X."/>
            <person name="Bult C.J."/>
            <person name="Agarwala R."/>
            <person name="Cherry J.L."/>
            <person name="DiCuccio M."/>
            <person name="Hlavina W."/>
            <person name="Kapustin Y."/>
            <person name="Meric P."/>
            <person name="Maglott D."/>
            <person name="Birtle Z."/>
            <person name="Marques A.C."/>
            <person name="Graves T."/>
            <person name="Zhou S."/>
            <person name="Teague B."/>
            <person name="Potamousis K."/>
            <person name="Churas C."/>
            <person name="Place M."/>
            <person name="Herschleb J."/>
            <person name="Runnheim R."/>
            <person name="Forrest D."/>
            <person name="Amos-Landgraf J."/>
            <person name="Schwartz D.C."/>
            <person name="Cheng Z."/>
            <person name="Lindblad-Toh K."/>
            <person name="Eichler E.E."/>
            <person name="Ponting C.P."/>
        </authorList>
    </citation>
    <scope>NUCLEOTIDE SEQUENCE [LARGE SCALE GENOMIC DNA]</scope>
    <source>
        <strain>C57BL/6J</strain>
    </source>
</reference>
<reference key="2">
    <citation type="journal article" date="2004" name="Genome Res.">
        <title>The status, quality, and expansion of the NIH full-length cDNA project: the Mammalian Gene Collection (MGC).</title>
        <authorList>
            <consortium name="The MGC Project Team"/>
        </authorList>
    </citation>
    <scope>NUCLEOTIDE SEQUENCE [LARGE SCALE MRNA]</scope>
    <source>
        <strain>FVB/N</strain>
        <tissue>Mammary tumor</tissue>
    </source>
</reference>
<reference key="3">
    <citation type="journal article" date="2004" name="Dev. Cell">
        <title>RGS14 is a mitotic spindle protein essential from the first division of the mammalian zygote.</title>
        <authorList>
            <person name="Martin-McCaffrey L."/>
            <person name="Willard F.S."/>
            <person name="Oliveira-dos-Santos A.J."/>
            <person name="Natale D.R."/>
            <person name="Snow B.E."/>
            <person name="Kimple R.J."/>
            <person name="Pajak A."/>
            <person name="Watson A.J."/>
            <person name="Dagnino L."/>
            <person name="Penninger J.M."/>
            <person name="Siderovski D.P."/>
            <person name="D'Souza S.J."/>
        </authorList>
    </citation>
    <scope>DEVELOPMENTAL STAGE</scope>
    <scope>TISSUE SPECIFICITY</scope>
</reference>
<reference key="4">
    <citation type="journal article" date="2010" name="Cell">
        <title>A tissue-specific atlas of mouse protein phosphorylation and expression.</title>
        <authorList>
            <person name="Huttlin E.L."/>
            <person name="Jedrychowski M.P."/>
            <person name="Elias J.E."/>
            <person name="Goswami T."/>
            <person name="Rad R."/>
            <person name="Beausoleil S.A."/>
            <person name="Villen J."/>
            <person name="Haas W."/>
            <person name="Sowa M.E."/>
            <person name="Gygi S.P."/>
        </authorList>
    </citation>
    <scope>PHOSPHORYLATION [LARGE SCALE ANALYSIS] AT SER-171; SER-194; SER-661; SER-671; SER-850; SER-879 AND SER-943</scope>
    <scope>IDENTIFICATION BY MASS SPECTROMETRY [LARGE SCALE ANALYSIS]</scope>
    <source>
        <tissue>Brain</tissue>
        <tissue>Brown adipose tissue</tissue>
        <tissue>Kidney</tissue>
        <tissue>Lung</tissue>
        <tissue>Spleen</tissue>
        <tissue>Testis</tissue>
    </source>
</reference>
<reference key="5">
    <citation type="journal article" date="2014" name="Mol. Cell. Proteomics">
        <title>Immunoaffinity enrichment and mass spectrometry analysis of protein methylation.</title>
        <authorList>
            <person name="Guo A."/>
            <person name="Gu H."/>
            <person name="Zhou J."/>
            <person name="Mulhern D."/>
            <person name="Wang Y."/>
            <person name="Lee K.A."/>
            <person name="Yang V."/>
            <person name="Aguiar M."/>
            <person name="Kornhauser J."/>
            <person name="Jia X."/>
            <person name="Ren J."/>
            <person name="Beausoleil S.A."/>
            <person name="Silva J.C."/>
            <person name="Vemulapalli V."/>
            <person name="Bedford M.T."/>
            <person name="Comb M.J."/>
        </authorList>
    </citation>
    <scope>METHYLATION [LARGE SCALE ANALYSIS] AT ARG-633</scope>
    <scope>IDENTIFICATION BY MASS SPECTROMETRY [LARGE SCALE ANALYSIS]</scope>
    <source>
        <tissue>Brain</tissue>
        <tissue>Embryo</tissue>
    </source>
</reference>
<accession>Q8CGE9</accession>
<accession>E9PXX2</accession>
<keyword id="KW-0966">Cell projection</keyword>
<keyword id="KW-0963">Cytoplasm</keyword>
<keyword id="KW-0343">GTPase activation</keyword>
<keyword id="KW-1017">Isopeptide bond</keyword>
<keyword id="KW-0488">Methylation</keyword>
<keyword id="KW-0539">Nucleus</keyword>
<keyword id="KW-0597">Phosphoprotein</keyword>
<keyword id="KW-1185">Reference proteome</keyword>
<keyword id="KW-0677">Repeat</keyword>
<keyword id="KW-0770">Synapse</keyword>
<keyword id="KW-0832">Ubl conjugation</keyword>
<name>RGS12_MOUSE</name>
<protein>
    <recommendedName>
        <fullName>Regulator of G-protein signaling 12</fullName>
        <shortName>RGS12</shortName>
    </recommendedName>
</protein>